<comment type="function">
    <text evidence="3 5 6">Trans-enoyl reductase; part of the gene cluster that mediates the biosynthesis of fumosorinone, a 2-pyridone alkaloid that acts as an inhibitor of protein tyrosine phosphatase 1B which is implicated asa negative regulator of insulin receptor signaling and a potential drug target for the treatment of type II diabetes and other associated metabolic syndromes (PubMed:25857260). The polyketide-amino acid backbone of fumosorinone is first assembled by the PKS-NRPS hybrid fumoS (PubMed:25857260). The PKS modules condense one acetyl-CoA starter unit with 7 malonyl-CoA units, programmed C-methylations occurring after the first 3 and the sixth extensions, and cycles of full reduction occurring after the first 2 extensions (Probable). Because fumoS lacks a designated enoyl reductase (ER) domain, the required activity is provided the enoyl reductase fumoC (Probable). Upon formation of the polyketide backbone on the thiotemplate, the polyketide is transferred to the NRPS module and linked to tyrosine to produce the acyltetramic acid intermediate called prefumosorinone A (Probable). The cytochrome P450 monooxygenase fumoA then probably catalyzes an unprecedented oxidative ring expansion of prefumosorinone A to form prefumosorinone B which contains the 2-pyridone core of fumosorinone (Probable). The cytochrome P450 monooxygenase fumoB might hydroxylate the nitrogen of prefumosorinone B, but not the acyltetramic acid prefumosorinone A, to form fumosorinone (Probable).</text>
</comment>
<comment type="pathway">
    <text evidence="3">Secondary metabolite biosynthesis.</text>
</comment>
<comment type="subunit">
    <text evidence="1">Monomer.</text>
</comment>
<comment type="similarity">
    <text evidence="5">Belongs to the zinc-containing alcohol dehydrogenase family.</text>
</comment>
<comment type="sequence caution" evidence="5">
    <conflict type="erroneous initiation">
        <sequence resource="EMBL-CDS" id="OAA53530"/>
    </conflict>
    <text>Truncated N-terminus.</text>
</comment>
<organism>
    <name type="scientific">Cordyceps fumosorosea (strain ARSEF 2679)</name>
    <name type="common">Isaria fumosorosea</name>
    <dbReference type="NCBI Taxonomy" id="1081104"/>
    <lineage>
        <taxon>Eukaryota</taxon>
        <taxon>Fungi</taxon>
        <taxon>Dikarya</taxon>
        <taxon>Ascomycota</taxon>
        <taxon>Pezizomycotina</taxon>
        <taxon>Sordariomycetes</taxon>
        <taxon>Hypocreomycetidae</taxon>
        <taxon>Hypocreales</taxon>
        <taxon>Cordycipitaceae</taxon>
        <taxon>Cordyceps</taxon>
    </lineage>
</organism>
<protein>
    <recommendedName>
        <fullName evidence="4">Trans-enoyl reductase fumoC</fullName>
        <ecNumber evidence="6">1.-.-.-</ecNumber>
    </recommendedName>
    <alternativeName>
        <fullName evidence="4">Fumosorinone biosynthesis cluster protein C</fullName>
    </alternativeName>
</protein>
<sequence>MRMPTNLQHPNMTAIASLPRSQNALKIVSPNTFHVDANAPLPTLVDHDSVLIRVVCVAINPVDGKSADLSATAGATSGTDFAGIVVALPPDTNSEPDDDALKIGDRVMGFVFGNNPQGRDNGAFAEYVTVPRRLLWRLPAHMSLETAASLPASLASVGMAMHYLQIPLSSLQSAISKSIASSSAAAAADDEGPFVLVYGGGTSTGCMAIQILRLAGFVPVTCCSSSSAARALSLGAAATFDYASATCGRDVREHTHDSLALAIDCISDSASMSICYEAIGGGGGRYVALDPFPVRGCVRRSVVPDWICTLTQFGRPVAWAPPYNIDERPGDRRFAEEWYRLAQRMLDAHVIRAPTLETRTGGLASVPEGISEVRMGEVKRKKLVYNIVEQKAAA</sequence>
<proteinExistence type="inferred from homology"/>
<keyword id="KW-0521">NADP</keyword>
<keyword id="KW-0560">Oxidoreductase</keyword>
<keyword id="KW-1185">Reference proteome</keyword>
<gene>
    <name type="ORF">ISF_08691</name>
</gene>
<reference key="1">
    <citation type="journal article" date="2015" name="Fungal Genet. Biol.">
        <title>Structure and biosynthesis of fumosorinone, a new protein tyrosine phosphatase 1B inhibitor firstly isolated from the entomogenous fungus Isaria fumosorosea.</title>
        <authorList>
            <person name="Liu L."/>
            <person name="Zhang J."/>
            <person name="Chen C."/>
            <person name="Teng J."/>
            <person name="Wang C."/>
            <person name="Luo D."/>
        </authorList>
    </citation>
    <scope>NUCLEOTIDE SEQUENCE [GENOMIC DNA]</scope>
    <scope>FUNCTION</scope>
    <scope>PATHWAY</scope>
    <source>
        <strain>ARSEF 2679</strain>
    </source>
</reference>
<reference key="2">
    <citation type="journal article" date="2016" name="Genome Biol. Evol.">
        <title>Divergent and convergent evolution of fungal pathogenicity.</title>
        <authorList>
            <person name="Shang Y."/>
            <person name="Xiao G."/>
            <person name="Zheng P."/>
            <person name="Cen K."/>
            <person name="Zhan S."/>
            <person name="Wang C."/>
        </authorList>
    </citation>
    <scope>NUCLEOTIDE SEQUENCE [LARGE SCALE GENOMIC DNA]</scope>
    <source>
        <strain>ARSEF 2679</strain>
    </source>
</reference>
<name>FUMOC_CORFA</name>
<evidence type="ECO:0000250" key="1">
    <source>
        <dbReference type="UniProtKB" id="Q9Y7D0"/>
    </source>
</evidence>
<evidence type="ECO:0000255" key="2"/>
<evidence type="ECO:0000269" key="3">
    <source>
    </source>
</evidence>
<evidence type="ECO:0000303" key="4">
    <source>
    </source>
</evidence>
<evidence type="ECO:0000305" key="5"/>
<evidence type="ECO:0000305" key="6">
    <source>
    </source>
</evidence>
<accession>A0A0E3U2K2</accession>
<accession>A0A162MAW5</accession>
<feature type="chain" id="PRO_0000451335" description="Trans-enoyl reductase fumoC">
    <location>
        <begin position="1"/>
        <end position="394"/>
    </location>
</feature>
<feature type="binding site" evidence="1">
    <location>
        <begin position="62"/>
        <end position="65"/>
    </location>
    <ligand>
        <name>NADP(+)</name>
        <dbReference type="ChEBI" id="CHEBI:58349"/>
    </ligand>
</feature>
<feature type="binding site" evidence="2">
    <location>
        <begin position="152"/>
        <end position="159"/>
    </location>
    <ligand>
        <name>substrate</name>
    </ligand>
</feature>
<feature type="binding site" evidence="1">
    <location>
        <begin position="224"/>
        <end position="227"/>
    </location>
    <ligand>
        <name>NADP(+)</name>
        <dbReference type="ChEBI" id="CHEBI:58349"/>
    </ligand>
</feature>
<feature type="binding site" evidence="1">
    <location>
        <position position="242"/>
    </location>
    <ligand>
        <name>NADP(+)</name>
        <dbReference type="ChEBI" id="CHEBI:58349"/>
    </ligand>
</feature>
<feature type="binding site" evidence="1">
    <location>
        <begin position="289"/>
        <end position="290"/>
    </location>
    <ligand>
        <name>NADP(+)</name>
        <dbReference type="ChEBI" id="CHEBI:58349"/>
    </ligand>
</feature>
<feature type="binding site" evidence="2">
    <location>
        <begin position="309"/>
        <end position="313"/>
    </location>
    <ligand>
        <name>substrate</name>
    </ligand>
</feature>
<feature type="binding site" evidence="1">
    <location>
        <begin position="378"/>
        <end position="379"/>
    </location>
    <ligand>
        <name>NADP(+)</name>
        <dbReference type="ChEBI" id="CHEBI:58349"/>
    </ligand>
</feature>
<dbReference type="EC" id="1.-.-.-" evidence="6"/>
<dbReference type="EMBL" id="KP737857">
    <property type="protein sequence ID" value="AKC54419.1"/>
    <property type="molecule type" value="Genomic_DNA"/>
</dbReference>
<dbReference type="EMBL" id="AZHB01000034">
    <property type="protein sequence ID" value="OAA53530.1"/>
    <property type="status" value="ALT_INIT"/>
    <property type="molecule type" value="Genomic_DNA"/>
</dbReference>
<dbReference type="RefSeq" id="XP_018700481.1">
    <property type="nucleotide sequence ID" value="XM_018852294.1"/>
</dbReference>
<dbReference type="SMR" id="A0A0E3U2K2"/>
<dbReference type="STRING" id="1081104.A0A162MAW5"/>
<dbReference type="GeneID" id="30024983"/>
<dbReference type="OrthoDB" id="48317at2759"/>
<dbReference type="Proteomes" id="UP000076744">
    <property type="component" value="Unassembled WGS sequence"/>
</dbReference>
<dbReference type="GO" id="GO:0016651">
    <property type="term" value="F:oxidoreductase activity, acting on NAD(P)H"/>
    <property type="evidence" value="ECO:0007669"/>
    <property type="project" value="InterPro"/>
</dbReference>
<dbReference type="CDD" id="cd08249">
    <property type="entry name" value="enoyl_reductase_like"/>
    <property type="match status" value="1"/>
</dbReference>
<dbReference type="Gene3D" id="3.90.180.10">
    <property type="entry name" value="Medium-chain alcohol dehydrogenases, catalytic domain"/>
    <property type="match status" value="1"/>
</dbReference>
<dbReference type="Gene3D" id="3.40.50.720">
    <property type="entry name" value="NAD(P)-binding Rossmann-like Domain"/>
    <property type="match status" value="1"/>
</dbReference>
<dbReference type="InterPro" id="IPR013149">
    <property type="entry name" value="ADH-like_C"/>
</dbReference>
<dbReference type="InterPro" id="IPR013154">
    <property type="entry name" value="ADH-like_N"/>
</dbReference>
<dbReference type="InterPro" id="IPR011032">
    <property type="entry name" value="GroES-like_sf"/>
</dbReference>
<dbReference type="InterPro" id="IPR036291">
    <property type="entry name" value="NAD(P)-bd_dom_sf"/>
</dbReference>
<dbReference type="InterPro" id="IPR020843">
    <property type="entry name" value="PKS_ER"/>
</dbReference>
<dbReference type="InterPro" id="IPR047122">
    <property type="entry name" value="Trans-enoyl_RdTase-like"/>
</dbReference>
<dbReference type="PANTHER" id="PTHR45348">
    <property type="entry name" value="HYPOTHETICAL OXIDOREDUCTASE (EUROFUNG)"/>
    <property type="match status" value="1"/>
</dbReference>
<dbReference type="PANTHER" id="PTHR45348:SF6">
    <property type="entry name" value="TRANS-ENOYL REDUCTASE APDC"/>
    <property type="match status" value="1"/>
</dbReference>
<dbReference type="Pfam" id="PF08240">
    <property type="entry name" value="ADH_N"/>
    <property type="match status" value="1"/>
</dbReference>
<dbReference type="Pfam" id="PF00107">
    <property type="entry name" value="ADH_zinc_N"/>
    <property type="match status" value="1"/>
</dbReference>
<dbReference type="SMART" id="SM00829">
    <property type="entry name" value="PKS_ER"/>
    <property type="match status" value="1"/>
</dbReference>
<dbReference type="SUPFAM" id="SSF50129">
    <property type="entry name" value="GroES-like"/>
    <property type="match status" value="1"/>
</dbReference>
<dbReference type="SUPFAM" id="SSF51735">
    <property type="entry name" value="NAD(P)-binding Rossmann-fold domains"/>
    <property type="match status" value="1"/>
</dbReference>